<dbReference type="EMBL" id="FN596741">
    <property type="protein sequence ID" value="CBI39011.3"/>
    <property type="molecule type" value="Genomic_DNA"/>
</dbReference>
<dbReference type="EMBL" id="FN597030">
    <property type="status" value="NOT_ANNOTATED_CDS"/>
    <property type="molecule type" value="Genomic_DNA"/>
</dbReference>
<dbReference type="EMBL" id="AM460343">
    <property type="protein sequence ID" value="CAN76914.1"/>
    <property type="molecule type" value="Genomic_DNA"/>
</dbReference>
<dbReference type="EMBL" id="EC925758">
    <property type="status" value="NOT_ANNOTATED_CDS"/>
    <property type="molecule type" value="mRNA"/>
</dbReference>
<dbReference type="RefSeq" id="XP_002276662.1">
    <property type="nucleotide sequence ID" value="XM_002276626.4"/>
</dbReference>
<dbReference type="FunCoup" id="A7QC16">
    <property type="interactions" value="479"/>
</dbReference>
<dbReference type="PaxDb" id="29760-VIT_10s0092g00220.t01"/>
<dbReference type="eggNOG" id="ENOG502RYH6">
    <property type="taxonomic scope" value="Eukaryota"/>
</dbReference>
<dbReference type="HOGENOM" id="CLU_066104_1_0_1"/>
<dbReference type="InParanoid" id="A7QC16"/>
<dbReference type="Proteomes" id="UP000009183">
    <property type="component" value="Chromosome 10"/>
</dbReference>
<dbReference type="GO" id="GO:0005886">
    <property type="term" value="C:plasma membrane"/>
    <property type="evidence" value="ECO:0000318"/>
    <property type="project" value="GO_Central"/>
</dbReference>
<dbReference type="InterPro" id="IPR006459">
    <property type="entry name" value="CASP/CASPL"/>
</dbReference>
<dbReference type="InterPro" id="IPR006702">
    <property type="entry name" value="CASP_dom"/>
</dbReference>
<dbReference type="InterPro" id="IPR044173">
    <property type="entry name" value="CASPL"/>
</dbReference>
<dbReference type="NCBIfam" id="TIGR01569">
    <property type="entry name" value="A_tha_TIGR01569"/>
    <property type="match status" value="1"/>
</dbReference>
<dbReference type="PANTHER" id="PTHR36488">
    <property type="entry name" value="CASP-LIKE PROTEIN 1U1"/>
    <property type="match status" value="1"/>
</dbReference>
<dbReference type="PANTHER" id="PTHR36488:SF8">
    <property type="entry name" value="CASP-LIKE PROTEIN 1U1"/>
    <property type="match status" value="1"/>
</dbReference>
<dbReference type="Pfam" id="PF04535">
    <property type="entry name" value="CASP_dom"/>
    <property type="match status" value="1"/>
</dbReference>
<proteinExistence type="evidence at transcript level"/>
<sequence>MASKGEEKPELVGSKQGIVSVTKAKHDQIVLVLRVVAFLATASATIVMGLNQETKTLLVGTIGTTPIRATLKAKFQHTPAFVFFVVANGLASVYNLVMLGVDVFGRKLDCKGLRLVIISILDMVIVAVVAAGASSAAFMAELGKNGNSHAKWNKICDKFESFCHQGGGALIPSFIALLLLFLISAISIITLHNQKLTSPHATTP</sequence>
<name>CSPL1_VITVI</name>
<protein>
    <recommendedName>
        <fullName>CASP-like protein 1B2</fullName>
        <shortName>VvCASPL1B2</shortName>
    </recommendedName>
</protein>
<reference key="1">
    <citation type="journal article" date="2007" name="Nature">
        <title>The grapevine genome sequence suggests ancestral hexaploidization in major angiosperm phyla.</title>
        <authorList>
            <person name="Jaillon O."/>
            <person name="Aury J.-M."/>
            <person name="Noel B."/>
            <person name="Policriti A."/>
            <person name="Clepet C."/>
            <person name="Casagrande A."/>
            <person name="Choisne N."/>
            <person name="Aubourg S."/>
            <person name="Vitulo N."/>
            <person name="Jubin C."/>
            <person name="Vezzi A."/>
            <person name="Legeai F."/>
            <person name="Hugueney P."/>
            <person name="Dasilva C."/>
            <person name="Horner D."/>
            <person name="Mica E."/>
            <person name="Jublot D."/>
            <person name="Poulain J."/>
            <person name="Bruyere C."/>
            <person name="Billault A."/>
            <person name="Segurens B."/>
            <person name="Gouyvenoux M."/>
            <person name="Ugarte E."/>
            <person name="Cattonaro F."/>
            <person name="Anthouard V."/>
            <person name="Vico V."/>
            <person name="Del Fabbro C."/>
            <person name="Alaux M."/>
            <person name="Di Gaspero G."/>
            <person name="Dumas V."/>
            <person name="Felice N."/>
            <person name="Paillard S."/>
            <person name="Juman I."/>
            <person name="Moroldo M."/>
            <person name="Scalabrin S."/>
            <person name="Canaguier A."/>
            <person name="Le Clainche I."/>
            <person name="Malacrida G."/>
            <person name="Durand E."/>
            <person name="Pesole G."/>
            <person name="Laucou V."/>
            <person name="Chatelet P."/>
            <person name="Merdinoglu D."/>
            <person name="Delledonne M."/>
            <person name="Pezzotti M."/>
            <person name="Lecharny A."/>
            <person name="Scarpelli C."/>
            <person name="Artiguenave F."/>
            <person name="Pe M.E."/>
            <person name="Valle G."/>
            <person name="Morgante M."/>
            <person name="Caboche M."/>
            <person name="Adam-Blondon A.-F."/>
            <person name="Weissenbach J."/>
            <person name="Quetier F."/>
            <person name="Wincker P."/>
        </authorList>
    </citation>
    <scope>NUCLEOTIDE SEQUENCE [LARGE SCALE GENOMIC DNA]</scope>
    <source>
        <strain>cv. Pinot noir / PN40024</strain>
    </source>
</reference>
<reference key="2">
    <citation type="journal article" date="2007" name="PLoS ONE">
        <title>A high quality draft consensus sequence of the genome of a heterozygous grapevine variety.</title>
        <authorList>
            <person name="Velasco R."/>
            <person name="Zharkikh A."/>
            <person name="Troggio M."/>
            <person name="Cartwright D.A."/>
            <person name="Cestaro A."/>
            <person name="Pruss D."/>
            <person name="Pindo M."/>
            <person name="FitzGerald L.M."/>
            <person name="Vezzulli S."/>
            <person name="Reid J."/>
            <person name="Malacarne G."/>
            <person name="Iliev D."/>
            <person name="Coppola G."/>
            <person name="Wardell B."/>
            <person name="Micheletti D."/>
            <person name="Macalma T."/>
            <person name="Facci M."/>
            <person name="Mitchell J.T."/>
            <person name="Perazzolli M."/>
            <person name="Eldredge G."/>
            <person name="Gatto P."/>
            <person name="Oyzerski R."/>
            <person name="Moretto M."/>
            <person name="Gutin N."/>
            <person name="Stefanini M."/>
            <person name="Chen Y."/>
            <person name="Segala C."/>
            <person name="Davenport C."/>
            <person name="Dematte L."/>
            <person name="Mraz A."/>
            <person name="Battilana J."/>
            <person name="Stormo K."/>
            <person name="Costa F."/>
            <person name="Tao Q."/>
            <person name="Si-Ammour A."/>
            <person name="Harkins T."/>
            <person name="Lackey A."/>
            <person name="Perbost C."/>
            <person name="Taillon B."/>
            <person name="Stella A."/>
            <person name="Solovyev V."/>
            <person name="Fawcett J.A."/>
            <person name="Sterck L."/>
            <person name="Vandepoele K."/>
            <person name="Grando S.M."/>
            <person name="Toppo S."/>
            <person name="Moser C."/>
            <person name="Lanchbury J."/>
            <person name="Bogden R."/>
            <person name="Skolnick M."/>
            <person name="Sgaramella V."/>
            <person name="Bhatnagar S.K."/>
            <person name="Fontana P."/>
            <person name="Gutin A."/>
            <person name="Van de Peer Y."/>
            <person name="Salamini F."/>
            <person name="Viola R."/>
        </authorList>
    </citation>
    <scope>NUCLEOTIDE SEQUENCE [LARGE SCALE GENOMIC DNA]</scope>
    <source>
        <strain>cv. Pinot noir</strain>
    </source>
</reference>
<reference key="3">
    <citation type="submission" date="2007-01" db="EMBL/GenBank/DDBJ databases">
        <title>Expressed sequence tags from grapevine (Vitis vinifera cv. Cabernet Sauvignon).</title>
        <authorList>
            <person name="Reid K.E."/>
            <person name="Liao N."/>
            <person name="Peng F."/>
            <person name="Schlosser J."/>
            <person name="Kirkpatrick R."/>
            <person name="Shukin R."/>
            <person name="Barber S."/>
            <person name="Holt R."/>
            <person name="Siddiqui A."/>
            <person name="Jones S."/>
            <person name="Marra M."/>
            <person name="Bowen P."/>
            <person name="Bohlmann J."/>
            <person name="Martinez Zapater J.M."/>
            <person name="Lund S.T."/>
        </authorList>
    </citation>
    <scope>NUCLEOTIDE SEQUENCE [LARGE SCALE MRNA]</scope>
    <source>
        <strain>cv. Cabernet Sauvignon</strain>
    </source>
</reference>
<reference key="4">
    <citation type="journal article" date="2014" name="Plant Physiol.">
        <title>Functional and evolutionary analysis of the CASPARIAN STRIP MEMBRANE DOMAIN PROTEIN family.</title>
        <authorList>
            <person name="Roppolo D."/>
            <person name="Boeckmann B."/>
            <person name="Pfister A."/>
            <person name="Boutet E."/>
            <person name="Rubio M.C."/>
            <person name="Denervaud-Tendon V."/>
            <person name="Vermeer J.E."/>
            <person name="Gheyselinck J."/>
            <person name="Xenarios I."/>
            <person name="Geldner N."/>
        </authorList>
    </citation>
    <scope>GENE FAMILY</scope>
    <scope>NOMENCLATURE</scope>
</reference>
<gene>
    <name type="ordered locus">VIT_10s0092g00220</name>
    <name type="ORF">GSVIVT00035198001</name>
    <name type="ORF">GSVIVT01037957001</name>
    <name type="ORF">VIT_00037957001</name>
    <name type="ORF">VITISV_004162</name>
    <name type="ORF">Vv10s0092g00220</name>
</gene>
<accession>A7QC16</accession>
<accession>A5BI77</accession>
<accession>D7U8E7</accession>
<evidence type="ECO:0000250" key="1"/>
<evidence type="ECO:0000255" key="2"/>
<evidence type="ECO:0000305" key="3"/>
<feature type="chain" id="PRO_0000370306" description="CASP-like protein 1B2">
    <location>
        <begin position="1"/>
        <end position="204"/>
    </location>
</feature>
<feature type="topological domain" description="Cytoplasmic" evidence="2">
    <location>
        <begin position="1"/>
        <end position="28"/>
    </location>
</feature>
<feature type="transmembrane region" description="Helical" evidence="2">
    <location>
        <begin position="29"/>
        <end position="49"/>
    </location>
</feature>
<feature type="topological domain" description="Extracellular" evidence="2">
    <location>
        <begin position="50"/>
        <end position="80"/>
    </location>
</feature>
<feature type="transmembrane region" description="Helical" evidence="2">
    <location>
        <begin position="81"/>
        <end position="101"/>
    </location>
</feature>
<feature type="topological domain" description="Cytoplasmic" evidence="2">
    <location>
        <begin position="102"/>
        <end position="114"/>
    </location>
</feature>
<feature type="transmembrane region" description="Helical" evidence="2">
    <location>
        <begin position="115"/>
        <end position="135"/>
    </location>
</feature>
<feature type="topological domain" description="Extracellular" evidence="2">
    <location>
        <begin position="136"/>
        <end position="168"/>
    </location>
</feature>
<feature type="transmembrane region" description="Helical" evidence="2">
    <location>
        <begin position="169"/>
        <end position="189"/>
    </location>
</feature>
<feature type="topological domain" description="Cytoplasmic" evidence="2">
    <location>
        <begin position="190"/>
        <end position="204"/>
    </location>
</feature>
<feature type="sequence conflict" description="In Ref. 3; EC925758." evidence="3" ref="3">
    <original>V</original>
    <variation>A</variation>
    <location>
        <position position="12"/>
    </location>
</feature>
<feature type="sequence conflict" description="In Ref. 3; EC925758." evidence="3" ref="3">
    <original>S</original>
    <variation>G</variation>
    <location>
        <position position="20"/>
    </location>
</feature>
<feature type="sequence conflict" description="In Ref. 1; CBI39011." evidence="3" ref="1">
    <original>F</original>
    <variation>L</variation>
    <location>
        <position position="181"/>
    </location>
</feature>
<comment type="subunit">
    <text evidence="1">Homodimer and heterodimers.</text>
</comment>
<comment type="subcellular location">
    <subcellularLocation>
        <location evidence="1">Cell membrane</location>
        <topology evidence="1">Multi-pass membrane protein</topology>
    </subcellularLocation>
</comment>
<comment type="similarity">
    <text evidence="3">Belongs to the Casparian strip membrane proteins (CASP) family.</text>
</comment>
<organism>
    <name type="scientific">Vitis vinifera</name>
    <name type="common">Grape</name>
    <dbReference type="NCBI Taxonomy" id="29760"/>
    <lineage>
        <taxon>Eukaryota</taxon>
        <taxon>Viridiplantae</taxon>
        <taxon>Streptophyta</taxon>
        <taxon>Embryophyta</taxon>
        <taxon>Tracheophyta</taxon>
        <taxon>Spermatophyta</taxon>
        <taxon>Magnoliopsida</taxon>
        <taxon>eudicotyledons</taxon>
        <taxon>Gunneridae</taxon>
        <taxon>Pentapetalae</taxon>
        <taxon>rosids</taxon>
        <taxon>Vitales</taxon>
        <taxon>Vitaceae</taxon>
        <taxon>Viteae</taxon>
        <taxon>Vitis</taxon>
    </lineage>
</organism>
<keyword id="KW-1003">Cell membrane</keyword>
<keyword id="KW-0472">Membrane</keyword>
<keyword id="KW-1185">Reference proteome</keyword>
<keyword id="KW-0812">Transmembrane</keyword>
<keyword id="KW-1133">Transmembrane helix</keyword>